<keyword id="KW-0456">Lyase</keyword>
<keyword id="KW-0501">Molybdenum cofactor biosynthesis</keyword>
<organism>
    <name type="scientific">Listeria welshimeri serovar 6b (strain ATCC 35897 / DSM 20650 / CCUG 15529 / CIP 8149 / NCTC 11857 / SLCC 5334 / V8)</name>
    <dbReference type="NCBI Taxonomy" id="386043"/>
    <lineage>
        <taxon>Bacteria</taxon>
        <taxon>Bacillati</taxon>
        <taxon>Bacillota</taxon>
        <taxon>Bacilli</taxon>
        <taxon>Bacillales</taxon>
        <taxon>Listeriaceae</taxon>
        <taxon>Listeria</taxon>
    </lineage>
</organism>
<name>MOAC_LISW6</name>
<dbReference type="EC" id="4.6.1.17" evidence="1"/>
<dbReference type="EMBL" id="AM263198">
    <property type="protein sequence ID" value="CAK20441.1"/>
    <property type="molecule type" value="Genomic_DNA"/>
</dbReference>
<dbReference type="RefSeq" id="WP_011701848.1">
    <property type="nucleotide sequence ID" value="NC_008555.1"/>
</dbReference>
<dbReference type="SMR" id="A0AHF9"/>
<dbReference type="STRING" id="386043.lwe1023"/>
<dbReference type="GeneID" id="61188913"/>
<dbReference type="KEGG" id="lwe:lwe1023"/>
<dbReference type="eggNOG" id="COG0315">
    <property type="taxonomic scope" value="Bacteria"/>
</dbReference>
<dbReference type="HOGENOM" id="CLU_074693_1_1_9"/>
<dbReference type="OrthoDB" id="9794429at2"/>
<dbReference type="UniPathway" id="UPA00344"/>
<dbReference type="Proteomes" id="UP000000779">
    <property type="component" value="Chromosome"/>
</dbReference>
<dbReference type="GO" id="GO:0061799">
    <property type="term" value="F:cyclic pyranopterin monophosphate synthase activity"/>
    <property type="evidence" value="ECO:0007669"/>
    <property type="project" value="UniProtKB-UniRule"/>
</dbReference>
<dbReference type="GO" id="GO:0006777">
    <property type="term" value="P:Mo-molybdopterin cofactor biosynthetic process"/>
    <property type="evidence" value="ECO:0007669"/>
    <property type="project" value="UniProtKB-UniRule"/>
</dbReference>
<dbReference type="CDD" id="cd01420">
    <property type="entry name" value="MoaC_PE"/>
    <property type="match status" value="1"/>
</dbReference>
<dbReference type="Gene3D" id="3.30.70.640">
    <property type="entry name" value="Molybdopterin cofactor biosynthesis C (MoaC) domain"/>
    <property type="match status" value="1"/>
</dbReference>
<dbReference type="HAMAP" id="MF_01224_B">
    <property type="entry name" value="MoaC_B"/>
    <property type="match status" value="1"/>
</dbReference>
<dbReference type="InterPro" id="IPR023045">
    <property type="entry name" value="MoaC"/>
</dbReference>
<dbReference type="InterPro" id="IPR047594">
    <property type="entry name" value="MoaC_bact/euk"/>
</dbReference>
<dbReference type="InterPro" id="IPR036522">
    <property type="entry name" value="MoaC_sf"/>
</dbReference>
<dbReference type="InterPro" id="IPR050105">
    <property type="entry name" value="MoCo_biosynth_MoaA/MoaC"/>
</dbReference>
<dbReference type="InterPro" id="IPR002820">
    <property type="entry name" value="Mopterin_CF_biosynth-C_dom"/>
</dbReference>
<dbReference type="NCBIfam" id="TIGR00581">
    <property type="entry name" value="moaC"/>
    <property type="match status" value="1"/>
</dbReference>
<dbReference type="NCBIfam" id="NF006870">
    <property type="entry name" value="PRK09364.1"/>
    <property type="match status" value="1"/>
</dbReference>
<dbReference type="PANTHER" id="PTHR22960:SF29">
    <property type="entry name" value="CYCLIC PYRANOPTERIN MONOPHOSPHATE SYNTHASE"/>
    <property type="match status" value="1"/>
</dbReference>
<dbReference type="PANTHER" id="PTHR22960">
    <property type="entry name" value="MOLYBDOPTERIN COFACTOR SYNTHESIS PROTEIN A"/>
    <property type="match status" value="1"/>
</dbReference>
<dbReference type="Pfam" id="PF01967">
    <property type="entry name" value="MoaC"/>
    <property type="match status" value="1"/>
</dbReference>
<dbReference type="SUPFAM" id="SSF55040">
    <property type="entry name" value="Molybdenum cofactor biosynthesis protein C, MoaC"/>
    <property type="match status" value="1"/>
</dbReference>
<protein>
    <recommendedName>
        <fullName evidence="1">Cyclic pyranopterin monophosphate synthase</fullName>
        <ecNumber evidence="1">4.6.1.17</ecNumber>
    </recommendedName>
    <alternativeName>
        <fullName evidence="1">Molybdenum cofactor biosynthesis protein C</fullName>
    </alternativeName>
</protein>
<evidence type="ECO:0000255" key="1">
    <source>
        <dbReference type="HAMAP-Rule" id="MF_01224"/>
    </source>
</evidence>
<sequence length="160" mass="17323">MEKDDLTHFNDEKRAKMVDVTSKSETKRRAIARATIHMNEETLARIHAGKIAKGDVLAVAQVAGIMAAKKTSELIPMCHPIMTTKADISFEDDGNTALTITSEVVTVGKTGVEMEALTAVTIAALTIYDMCKAMDKGMRIEKTYLVEKTGGKSGTFKAEA</sequence>
<gene>
    <name evidence="1" type="primary">moaC</name>
    <name type="ordered locus">lwe1023</name>
</gene>
<feature type="chain" id="PRO_1000054105" description="Cyclic pyranopterin monophosphate synthase">
    <location>
        <begin position="1"/>
        <end position="160"/>
    </location>
</feature>
<feature type="active site" evidence="1">
    <location>
        <position position="129"/>
    </location>
</feature>
<feature type="binding site" evidence="1">
    <location>
        <begin position="77"/>
        <end position="79"/>
    </location>
    <ligand>
        <name>substrate</name>
    </ligand>
</feature>
<feature type="binding site" evidence="1">
    <location>
        <begin position="114"/>
        <end position="115"/>
    </location>
    <ligand>
        <name>substrate</name>
    </ligand>
</feature>
<comment type="function">
    <text evidence="1">Catalyzes the conversion of (8S)-3',8-cyclo-7,8-dihydroguanosine 5'-triphosphate to cyclic pyranopterin monophosphate (cPMP).</text>
</comment>
<comment type="catalytic activity">
    <reaction evidence="1">
        <text>(8S)-3',8-cyclo-7,8-dihydroguanosine 5'-triphosphate = cyclic pyranopterin phosphate + diphosphate</text>
        <dbReference type="Rhea" id="RHEA:49580"/>
        <dbReference type="ChEBI" id="CHEBI:33019"/>
        <dbReference type="ChEBI" id="CHEBI:59648"/>
        <dbReference type="ChEBI" id="CHEBI:131766"/>
        <dbReference type="EC" id="4.6.1.17"/>
    </reaction>
</comment>
<comment type="pathway">
    <text evidence="1">Cofactor biosynthesis; molybdopterin biosynthesis.</text>
</comment>
<comment type="subunit">
    <text evidence="1">Homohexamer; trimer of dimers.</text>
</comment>
<comment type="similarity">
    <text evidence="1">Belongs to the MoaC family.</text>
</comment>
<proteinExistence type="inferred from homology"/>
<accession>A0AHF9</accession>
<reference key="1">
    <citation type="journal article" date="2006" name="J. Bacteriol.">
        <title>Whole-genome sequence of Listeria welshimeri reveals common steps in genome reduction with Listeria innocua as compared to Listeria monocytogenes.</title>
        <authorList>
            <person name="Hain T."/>
            <person name="Steinweg C."/>
            <person name="Kuenne C.T."/>
            <person name="Billion A."/>
            <person name="Ghai R."/>
            <person name="Chatterjee S.S."/>
            <person name="Domann E."/>
            <person name="Kaerst U."/>
            <person name="Goesmann A."/>
            <person name="Bekel T."/>
            <person name="Bartels D."/>
            <person name="Kaiser O."/>
            <person name="Meyer F."/>
            <person name="Puehler A."/>
            <person name="Weisshaar B."/>
            <person name="Wehland J."/>
            <person name="Liang C."/>
            <person name="Dandekar T."/>
            <person name="Lampidis R."/>
            <person name="Kreft J."/>
            <person name="Goebel W."/>
            <person name="Chakraborty T."/>
        </authorList>
    </citation>
    <scope>NUCLEOTIDE SEQUENCE [LARGE SCALE GENOMIC DNA]</scope>
    <source>
        <strain>ATCC 35897 / DSM 20650 / CCUG 15529 / CIP 8149 / NCTC 11857 / SLCC 5334 / V8</strain>
    </source>
</reference>